<sequence>MARTTPIARYRNIGISAHIDAGKTTTTERILFYTGVNHKIGEVHDGAATMDWMEQEQERGITITSAATTAFWSGMAKQYEPHRINIIDTPGHVDFTIEVERSMRVLDGAVMVYCAVGGVQPQSETVWRQANKYKVPRIAFVNKMDRMGANFLKVVNQIKTRLGANPVPLQLAIGAEEHFTGVVDLVKMKAINWNDADQGVTFEYEDIPADMVELANEWHQNLIESAAEASEELMEKYLGGEELTEAEIKGALRQRVLNNEIILVTCGSAFKNKGVQAMLDAVIDYLPSPVDVPAINGILDDGKDTPAERHASDDEPFSALAFKIATDPFVGNLTFFRVYSGVVNSGDTVLNSVKAARERFGRIVQMHANKREEIKEVRAGDIAAAIGLKDVTTGDTLCDPDAPIILERMEFPEPVISIAVEPKTKADQEKMGLALGRLAKEDPSFRVWTDEESNQTIIAGMGELHLDIIVDRMKREFNVEANVGKPQVAYRETIRQKVTDVEGKHAKQSGGRGQYGHVVIDMYPLEPGSNPKGYEFINDIKGGVIPGEYIPAVDKGIQEQLKAGPLAGYPVVDMGIRLHFGSYHDVDSSELAFKLAASIAFKEGFKKAKPVLLEPIMKVEVETPEENTGDVIGDLSRRRGMLKGQESEVTGVKIHAEVPLSEMFGYATQLRSLTKGRASYTMEFLKYDEAPSNVAQAVIEARGK</sequence>
<dbReference type="EMBL" id="CP000243">
    <property type="protein sequence ID" value="ABE09271.1"/>
    <property type="molecule type" value="Genomic_DNA"/>
</dbReference>
<dbReference type="RefSeq" id="WP_000124700.1">
    <property type="nucleotide sequence ID" value="NZ_CP064825.1"/>
</dbReference>
<dbReference type="SMR" id="Q1R5U3"/>
<dbReference type="GeneID" id="93778658"/>
<dbReference type="KEGG" id="eci:UTI89_C3842"/>
<dbReference type="HOGENOM" id="CLU_002794_4_1_6"/>
<dbReference type="Proteomes" id="UP000001952">
    <property type="component" value="Chromosome"/>
</dbReference>
<dbReference type="GO" id="GO:0005737">
    <property type="term" value="C:cytoplasm"/>
    <property type="evidence" value="ECO:0007669"/>
    <property type="project" value="UniProtKB-SubCell"/>
</dbReference>
<dbReference type="GO" id="GO:0005525">
    <property type="term" value="F:GTP binding"/>
    <property type="evidence" value="ECO:0007669"/>
    <property type="project" value="UniProtKB-UniRule"/>
</dbReference>
<dbReference type="GO" id="GO:0003924">
    <property type="term" value="F:GTPase activity"/>
    <property type="evidence" value="ECO:0007669"/>
    <property type="project" value="InterPro"/>
</dbReference>
<dbReference type="GO" id="GO:0097216">
    <property type="term" value="F:guanosine tetraphosphate binding"/>
    <property type="evidence" value="ECO:0007669"/>
    <property type="project" value="UniProtKB-ARBA"/>
</dbReference>
<dbReference type="GO" id="GO:0003746">
    <property type="term" value="F:translation elongation factor activity"/>
    <property type="evidence" value="ECO:0007669"/>
    <property type="project" value="UniProtKB-UniRule"/>
</dbReference>
<dbReference type="GO" id="GO:0032790">
    <property type="term" value="P:ribosome disassembly"/>
    <property type="evidence" value="ECO:0007669"/>
    <property type="project" value="TreeGrafter"/>
</dbReference>
<dbReference type="CDD" id="cd01886">
    <property type="entry name" value="EF-G"/>
    <property type="match status" value="1"/>
</dbReference>
<dbReference type="CDD" id="cd16262">
    <property type="entry name" value="EFG_III"/>
    <property type="match status" value="1"/>
</dbReference>
<dbReference type="CDD" id="cd01434">
    <property type="entry name" value="EFG_mtEFG1_IV"/>
    <property type="match status" value="1"/>
</dbReference>
<dbReference type="CDD" id="cd03713">
    <property type="entry name" value="EFG_mtEFG_C"/>
    <property type="match status" value="1"/>
</dbReference>
<dbReference type="CDD" id="cd04088">
    <property type="entry name" value="EFG_mtEFG_II"/>
    <property type="match status" value="1"/>
</dbReference>
<dbReference type="FunFam" id="2.40.30.10:FF:000006">
    <property type="entry name" value="Elongation factor G"/>
    <property type="match status" value="1"/>
</dbReference>
<dbReference type="FunFam" id="3.30.230.10:FF:000003">
    <property type="entry name" value="Elongation factor G"/>
    <property type="match status" value="1"/>
</dbReference>
<dbReference type="FunFam" id="3.30.70.240:FF:000001">
    <property type="entry name" value="Elongation factor G"/>
    <property type="match status" value="1"/>
</dbReference>
<dbReference type="FunFam" id="3.30.70.870:FF:000001">
    <property type="entry name" value="Elongation factor G"/>
    <property type="match status" value="1"/>
</dbReference>
<dbReference type="FunFam" id="3.40.50.300:FF:000029">
    <property type="entry name" value="Elongation factor G"/>
    <property type="match status" value="1"/>
</dbReference>
<dbReference type="Gene3D" id="3.30.230.10">
    <property type="match status" value="1"/>
</dbReference>
<dbReference type="Gene3D" id="3.30.70.240">
    <property type="match status" value="1"/>
</dbReference>
<dbReference type="Gene3D" id="3.30.70.870">
    <property type="entry name" value="Elongation Factor G (Translational Gtpase), domain 3"/>
    <property type="match status" value="1"/>
</dbReference>
<dbReference type="Gene3D" id="3.40.50.300">
    <property type="entry name" value="P-loop containing nucleotide triphosphate hydrolases"/>
    <property type="match status" value="1"/>
</dbReference>
<dbReference type="Gene3D" id="2.40.30.10">
    <property type="entry name" value="Translation factors"/>
    <property type="match status" value="1"/>
</dbReference>
<dbReference type="HAMAP" id="MF_00054_B">
    <property type="entry name" value="EF_G_EF_2_B"/>
    <property type="match status" value="1"/>
</dbReference>
<dbReference type="InterPro" id="IPR041095">
    <property type="entry name" value="EFG_II"/>
</dbReference>
<dbReference type="InterPro" id="IPR009022">
    <property type="entry name" value="EFG_III"/>
</dbReference>
<dbReference type="InterPro" id="IPR035647">
    <property type="entry name" value="EFG_III/V"/>
</dbReference>
<dbReference type="InterPro" id="IPR047872">
    <property type="entry name" value="EFG_IV"/>
</dbReference>
<dbReference type="InterPro" id="IPR035649">
    <property type="entry name" value="EFG_V"/>
</dbReference>
<dbReference type="InterPro" id="IPR000640">
    <property type="entry name" value="EFG_V-like"/>
</dbReference>
<dbReference type="InterPro" id="IPR004161">
    <property type="entry name" value="EFTu-like_2"/>
</dbReference>
<dbReference type="InterPro" id="IPR031157">
    <property type="entry name" value="G_TR_CS"/>
</dbReference>
<dbReference type="InterPro" id="IPR027417">
    <property type="entry name" value="P-loop_NTPase"/>
</dbReference>
<dbReference type="InterPro" id="IPR020568">
    <property type="entry name" value="Ribosomal_Su5_D2-typ_SF"/>
</dbReference>
<dbReference type="InterPro" id="IPR014721">
    <property type="entry name" value="Ribsml_uS5_D2-typ_fold_subgr"/>
</dbReference>
<dbReference type="InterPro" id="IPR005225">
    <property type="entry name" value="Small_GTP-bd"/>
</dbReference>
<dbReference type="InterPro" id="IPR000795">
    <property type="entry name" value="T_Tr_GTP-bd_dom"/>
</dbReference>
<dbReference type="InterPro" id="IPR009000">
    <property type="entry name" value="Transl_B-barrel_sf"/>
</dbReference>
<dbReference type="InterPro" id="IPR004540">
    <property type="entry name" value="Transl_elong_EFG/EF2"/>
</dbReference>
<dbReference type="InterPro" id="IPR005517">
    <property type="entry name" value="Transl_elong_EFG/EF2_IV"/>
</dbReference>
<dbReference type="NCBIfam" id="TIGR00484">
    <property type="entry name" value="EF-G"/>
    <property type="match status" value="1"/>
</dbReference>
<dbReference type="NCBIfam" id="NF009381">
    <property type="entry name" value="PRK12740.1-5"/>
    <property type="match status" value="1"/>
</dbReference>
<dbReference type="NCBIfam" id="TIGR00231">
    <property type="entry name" value="small_GTP"/>
    <property type="match status" value="1"/>
</dbReference>
<dbReference type="PANTHER" id="PTHR43261:SF1">
    <property type="entry name" value="RIBOSOME-RELEASING FACTOR 2, MITOCHONDRIAL"/>
    <property type="match status" value="1"/>
</dbReference>
<dbReference type="PANTHER" id="PTHR43261">
    <property type="entry name" value="TRANSLATION ELONGATION FACTOR G-RELATED"/>
    <property type="match status" value="1"/>
</dbReference>
<dbReference type="Pfam" id="PF00679">
    <property type="entry name" value="EFG_C"/>
    <property type="match status" value="1"/>
</dbReference>
<dbReference type="Pfam" id="PF14492">
    <property type="entry name" value="EFG_III"/>
    <property type="match status" value="1"/>
</dbReference>
<dbReference type="Pfam" id="PF03764">
    <property type="entry name" value="EFG_IV"/>
    <property type="match status" value="1"/>
</dbReference>
<dbReference type="Pfam" id="PF00009">
    <property type="entry name" value="GTP_EFTU"/>
    <property type="match status" value="1"/>
</dbReference>
<dbReference type="Pfam" id="PF03144">
    <property type="entry name" value="GTP_EFTU_D2"/>
    <property type="match status" value="1"/>
</dbReference>
<dbReference type="PRINTS" id="PR00315">
    <property type="entry name" value="ELONGATNFCT"/>
</dbReference>
<dbReference type="SMART" id="SM00838">
    <property type="entry name" value="EFG_C"/>
    <property type="match status" value="1"/>
</dbReference>
<dbReference type="SMART" id="SM00889">
    <property type="entry name" value="EFG_IV"/>
    <property type="match status" value="1"/>
</dbReference>
<dbReference type="SUPFAM" id="SSF54980">
    <property type="entry name" value="EF-G C-terminal domain-like"/>
    <property type="match status" value="2"/>
</dbReference>
<dbReference type="SUPFAM" id="SSF52540">
    <property type="entry name" value="P-loop containing nucleoside triphosphate hydrolases"/>
    <property type="match status" value="1"/>
</dbReference>
<dbReference type="SUPFAM" id="SSF54211">
    <property type="entry name" value="Ribosomal protein S5 domain 2-like"/>
    <property type="match status" value="1"/>
</dbReference>
<dbReference type="SUPFAM" id="SSF50447">
    <property type="entry name" value="Translation proteins"/>
    <property type="match status" value="1"/>
</dbReference>
<dbReference type="PROSITE" id="PS00301">
    <property type="entry name" value="G_TR_1"/>
    <property type="match status" value="1"/>
</dbReference>
<dbReference type="PROSITE" id="PS51722">
    <property type="entry name" value="G_TR_2"/>
    <property type="match status" value="1"/>
</dbReference>
<name>EFG_ECOUT</name>
<keyword id="KW-0007">Acetylation</keyword>
<keyword id="KW-0963">Cytoplasm</keyword>
<keyword id="KW-0251">Elongation factor</keyword>
<keyword id="KW-0342">GTP-binding</keyword>
<keyword id="KW-0547">Nucleotide-binding</keyword>
<keyword id="KW-0648">Protein biosynthesis</keyword>
<protein>
    <recommendedName>
        <fullName evidence="2">Elongation factor G</fullName>
        <shortName evidence="2">EF-G</shortName>
    </recommendedName>
</protein>
<accession>Q1R5U3</accession>
<evidence type="ECO:0000250" key="1"/>
<evidence type="ECO:0000255" key="2">
    <source>
        <dbReference type="HAMAP-Rule" id="MF_00054"/>
    </source>
</evidence>
<comment type="function">
    <text evidence="2">Catalyzes the GTP-dependent ribosomal translocation step during translation elongation. During this step, the ribosome changes from the pre-translocational (PRE) to the post-translocational (POST) state as the newly formed A-site-bound peptidyl-tRNA and P-site-bound deacylated tRNA move to the P and E sites, respectively. Catalyzes the coordinated movement of the two tRNA molecules, the mRNA and conformational changes in the ribosome.</text>
</comment>
<comment type="subcellular location">
    <subcellularLocation>
        <location evidence="2">Cytoplasm</location>
    </subcellularLocation>
</comment>
<comment type="similarity">
    <text evidence="2">Belongs to the TRAFAC class translation factor GTPase superfamily. Classic translation factor GTPase family. EF-G/EF-2 subfamily.</text>
</comment>
<proteinExistence type="inferred from homology"/>
<feature type="initiator methionine" description="Removed" evidence="1">
    <location>
        <position position="1"/>
    </location>
</feature>
<feature type="chain" id="PRO_0000263448" description="Elongation factor G">
    <location>
        <begin position="2"/>
        <end position="704"/>
    </location>
</feature>
<feature type="domain" description="tr-type G">
    <location>
        <begin position="8"/>
        <end position="290"/>
    </location>
</feature>
<feature type="binding site" evidence="2">
    <location>
        <begin position="17"/>
        <end position="24"/>
    </location>
    <ligand>
        <name>GTP</name>
        <dbReference type="ChEBI" id="CHEBI:37565"/>
    </ligand>
</feature>
<feature type="binding site" evidence="2">
    <location>
        <begin position="88"/>
        <end position="92"/>
    </location>
    <ligand>
        <name>GTP</name>
        <dbReference type="ChEBI" id="CHEBI:37565"/>
    </ligand>
</feature>
<feature type="binding site" evidence="2">
    <location>
        <begin position="142"/>
        <end position="145"/>
    </location>
    <ligand>
        <name>GTP</name>
        <dbReference type="ChEBI" id="CHEBI:37565"/>
    </ligand>
</feature>
<feature type="modified residue" description="N6-acetyllysine" evidence="1">
    <location>
        <position position="504"/>
    </location>
</feature>
<feature type="modified residue" description="N6-acetyllysine" evidence="1">
    <location>
        <position position="643"/>
    </location>
</feature>
<organism>
    <name type="scientific">Escherichia coli (strain UTI89 / UPEC)</name>
    <dbReference type="NCBI Taxonomy" id="364106"/>
    <lineage>
        <taxon>Bacteria</taxon>
        <taxon>Pseudomonadati</taxon>
        <taxon>Pseudomonadota</taxon>
        <taxon>Gammaproteobacteria</taxon>
        <taxon>Enterobacterales</taxon>
        <taxon>Enterobacteriaceae</taxon>
        <taxon>Escherichia</taxon>
    </lineage>
</organism>
<gene>
    <name evidence="2" type="primary">fusA</name>
    <name type="ordered locus">UTI89_C3842</name>
</gene>
<reference key="1">
    <citation type="journal article" date="2006" name="Proc. Natl. Acad. Sci. U.S.A.">
        <title>Identification of genes subject to positive selection in uropathogenic strains of Escherichia coli: a comparative genomics approach.</title>
        <authorList>
            <person name="Chen S.L."/>
            <person name="Hung C.-S."/>
            <person name="Xu J."/>
            <person name="Reigstad C.S."/>
            <person name="Magrini V."/>
            <person name="Sabo A."/>
            <person name="Blasiar D."/>
            <person name="Bieri T."/>
            <person name="Meyer R.R."/>
            <person name="Ozersky P."/>
            <person name="Armstrong J.R."/>
            <person name="Fulton R.S."/>
            <person name="Latreille J.P."/>
            <person name="Spieth J."/>
            <person name="Hooton T.M."/>
            <person name="Mardis E.R."/>
            <person name="Hultgren S.J."/>
            <person name="Gordon J.I."/>
        </authorList>
    </citation>
    <scope>NUCLEOTIDE SEQUENCE [LARGE SCALE GENOMIC DNA]</scope>
    <source>
        <strain>UTI89 / UPEC</strain>
    </source>
</reference>